<proteinExistence type="inferred from homology"/>
<organism>
    <name type="scientific">Cyanophora paradoxa</name>
    <dbReference type="NCBI Taxonomy" id="2762"/>
    <lineage>
        <taxon>Eukaryota</taxon>
        <taxon>Glaucocystophyceae</taxon>
        <taxon>Cyanophoraceae</taxon>
        <taxon>Cyanophora</taxon>
    </lineage>
</organism>
<feature type="chain" id="PRO_0000179729" description="Putative ATP-dependent Clp protease proteolytic subunit-like">
    <location>
        <begin position="1"/>
        <end position="199"/>
    </location>
</feature>
<evidence type="ECO:0000305" key="1"/>
<protein>
    <recommendedName>
        <fullName>Putative ATP-dependent Clp protease proteolytic subunit-like</fullName>
    </recommendedName>
    <alternativeName>
        <fullName>Endopeptidase Clp-like</fullName>
    </alternativeName>
</protein>
<reference key="1">
    <citation type="journal article" date="1995" name="Plant Mol. Biol. Rep.">
        <title>Nucleotide sequence of the cyanelle DNA from Cyanophora paradoxa.</title>
        <authorList>
            <person name="Stirewalt V.L."/>
            <person name="Michalowski C.B."/>
            <person name="Loeffelhardt W."/>
            <person name="Bohnert H.J."/>
            <person name="Bryant D.A."/>
        </authorList>
    </citation>
    <scope>NUCLEOTIDE SEQUENCE [LARGE SCALE GENOMIC DNA]</scope>
    <source>
        <strain>UTEX LB 555 / Pringsheim</strain>
    </source>
</reference>
<reference key="2">
    <citation type="book" date="1997" name="Eukaryotism and symbiosis">
        <title>The complete sequence of the cyanelle genome of Cyanophora paradoxa: the genetic complexity of a primitive plastid.</title>
        <editorList>
            <person name="Schenk H.E.A."/>
            <person name="Herrmann R."/>
            <person name="Jeon K.W."/>
            <person name="Mueller N.E."/>
            <person name="Schwemmler W."/>
        </editorList>
        <authorList>
            <person name="Loeffelhardt W."/>
            <person name="Stirewalt V.L."/>
            <person name="Michalowski C.B."/>
            <person name="Annarella M."/>
            <person name="Farley J.Y."/>
            <person name="Schluchter W.M."/>
            <person name="Chung S."/>
            <person name="Newmann-Spallart C."/>
            <person name="Steiner J.M."/>
            <person name="Jakowitsch J."/>
            <person name="Bohnert H.J."/>
            <person name="Bryant D.A."/>
        </authorList>
    </citation>
    <scope>NUCLEOTIDE SEQUENCE [LARGE SCALE GENOMIC DNA]</scope>
    <source>
        <strain>UTEX LB 555 / Pringsheim</strain>
    </source>
</reference>
<accession>P48254</accession>
<keyword id="KW-0194">Cyanelle</keyword>
<keyword id="KW-0934">Plastid</keyword>
<name>CLPPL_CYAPA</name>
<gene>
    <name type="primary">clpP-B</name>
    <name type="synonym">clpP2</name>
</gene>
<comment type="function">
    <text>Has lost the two conserved residues (Ser and His) proposed to be part of the active site. Therefore it could be inactive.</text>
</comment>
<comment type="subunit">
    <text>Component of the chloroplastic Clp protease core complex.</text>
</comment>
<comment type="subcellular location">
    <subcellularLocation>
        <location>Plastid</location>
        <location>Cyanelle</location>
    </subcellularLocation>
</comment>
<comment type="similarity">
    <text evidence="1">Belongs to the peptidase S14 family.</text>
</comment>
<dbReference type="EMBL" id="U30821">
    <property type="protein sequence ID" value="AAA81214.1"/>
    <property type="molecule type" value="Genomic_DNA"/>
</dbReference>
<dbReference type="PIR" id="T06871">
    <property type="entry name" value="T06871"/>
</dbReference>
<dbReference type="SMR" id="P48254"/>
<dbReference type="GO" id="GO:0009842">
    <property type="term" value="C:cyanelle"/>
    <property type="evidence" value="ECO:0007669"/>
    <property type="project" value="UniProtKB-SubCell"/>
</dbReference>
<dbReference type="GO" id="GO:0009368">
    <property type="term" value="C:endopeptidase Clp complex"/>
    <property type="evidence" value="ECO:0007669"/>
    <property type="project" value="TreeGrafter"/>
</dbReference>
<dbReference type="GO" id="GO:0004176">
    <property type="term" value="F:ATP-dependent peptidase activity"/>
    <property type="evidence" value="ECO:0007669"/>
    <property type="project" value="InterPro"/>
</dbReference>
<dbReference type="GO" id="GO:0051117">
    <property type="term" value="F:ATPase binding"/>
    <property type="evidence" value="ECO:0007669"/>
    <property type="project" value="TreeGrafter"/>
</dbReference>
<dbReference type="GO" id="GO:0004252">
    <property type="term" value="F:serine-type endopeptidase activity"/>
    <property type="evidence" value="ECO:0007669"/>
    <property type="project" value="InterPro"/>
</dbReference>
<dbReference type="GO" id="GO:0006515">
    <property type="term" value="P:protein quality control for misfolded or incompletely synthesized proteins"/>
    <property type="evidence" value="ECO:0007669"/>
    <property type="project" value="TreeGrafter"/>
</dbReference>
<dbReference type="CDD" id="cd07017">
    <property type="entry name" value="S14_ClpP_2"/>
    <property type="match status" value="1"/>
</dbReference>
<dbReference type="Gene3D" id="3.90.226.10">
    <property type="entry name" value="2-enoyl-CoA Hydratase, Chain A, domain 1"/>
    <property type="match status" value="1"/>
</dbReference>
<dbReference type="InterPro" id="IPR001907">
    <property type="entry name" value="ClpP"/>
</dbReference>
<dbReference type="InterPro" id="IPR029045">
    <property type="entry name" value="ClpP/crotonase-like_dom_sf"/>
</dbReference>
<dbReference type="InterPro" id="IPR023562">
    <property type="entry name" value="ClpP/TepA"/>
</dbReference>
<dbReference type="PANTHER" id="PTHR10381">
    <property type="entry name" value="ATP-DEPENDENT CLP PROTEASE PROTEOLYTIC SUBUNIT"/>
    <property type="match status" value="1"/>
</dbReference>
<dbReference type="PANTHER" id="PTHR10381:SF11">
    <property type="entry name" value="ATP-DEPENDENT CLP PROTEASE PROTEOLYTIC SUBUNIT, MITOCHONDRIAL"/>
    <property type="match status" value="1"/>
</dbReference>
<dbReference type="Pfam" id="PF00574">
    <property type="entry name" value="CLP_protease"/>
    <property type="match status" value="1"/>
</dbReference>
<dbReference type="PRINTS" id="PR00127">
    <property type="entry name" value="CLPPROTEASEP"/>
</dbReference>
<dbReference type="SUPFAM" id="SSF52096">
    <property type="entry name" value="ClpP/crotonase"/>
    <property type="match status" value="1"/>
</dbReference>
<geneLocation type="cyanelle"/>
<sequence length="199" mass="22195">MPIGYPLVKAMDKDRFISYFLINNALLNERVIFLCNYEDATDESIYIGMLLYLESENSQKPVSFYINSSITFPNLCFGLYDTILQIKADIVTICLGLAGGMSSLILAAGTKGQRFALPNSRIMMQEPLIDGGVNGQATDLAIEAKELMDTKEILINLYHERTGQPKPVIEKDLQRPRYFSAQAAKEYGFIDSLLMASNG</sequence>